<organism>
    <name type="scientific">Human herpesvirus 6A (strain Uganda-1102)</name>
    <name type="common">HHV-6 variant A</name>
    <name type="synonym">Human B lymphotropic virus</name>
    <dbReference type="NCBI Taxonomy" id="10370"/>
    <lineage>
        <taxon>Viruses</taxon>
        <taxon>Duplodnaviria</taxon>
        <taxon>Heunggongvirae</taxon>
        <taxon>Peploviricota</taxon>
        <taxon>Herviviricetes</taxon>
        <taxon>Herpesvirales</taxon>
        <taxon>Orthoherpesviridae</taxon>
        <taxon>Betaherpesvirinae</taxon>
        <taxon>Roseolovirus</taxon>
        <taxon>Roseolovirus humanbeta6a</taxon>
        <taxon>Human betaherpesvirus 6A</taxon>
    </lineage>
</organism>
<comment type="subcellular location">
    <subcellularLocation>
        <location evidence="2">Membrane</location>
        <topology evidence="2">Single-pass membrane protein</topology>
    </subcellularLocation>
</comment>
<comment type="similarity">
    <text evidence="2">Belongs to the herpesviridae immediate early glycoprotein family.</text>
</comment>
<comment type="sequence caution" evidence="2">
    <conflict type="erroneous initiation">
        <sequence resource="EMBL-CDS" id="AAA16724"/>
    </conflict>
    <text>Extended N-terminus.</text>
</comment>
<evidence type="ECO:0000255" key="1"/>
<evidence type="ECO:0000305" key="2"/>
<accession>Q69553</accession>
<accession>Q69041</accession>
<keyword id="KW-0325">Glycoprotein</keyword>
<keyword id="KW-0472">Membrane</keyword>
<keyword id="KW-1185">Reference proteome</keyword>
<keyword id="KW-0732">Signal</keyword>
<keyword id="KW-0812">Transmembrane</keyword>
<keyword id="KW-1133">Transmembrane helix</keyword>
<proteinExistence type="inferred from homology"/>
<feature type="signal peptide" evidence="1">
    <location>
        <begin position="1"/>
        <end position="21"/>
    </location>
</feature>
<feature type="chain" id="PRO_0000342573" description="Putative immediate early glycoprotein">
    <location>
        <begin position="22"/>
        <end position="293"/>
    </location>
</feature>
<feature type="transmembrane region" description="Helical" evidence="1">
    <location>
        <begin position="262"/>
        <end position="282"/>
    </location>
</feature>
<feature type="glycosylation site" description="N-linked (GlcNAc...) asparagine; by host" evidence="1">
    <location>
        <position position="23"/>
    </location>
</feature>
<feature type="glycosylation site" description="N-linked (GlcNAc...) asparagine; by host" evidence="1">
    <location>
        <position position="55"/>
    </location>
</feature>
<feature type="glycosylation site" description="N-linked (GlcNAc...) asparagine; by host" evidence="1">
    <location>
        <position position="83"/>
    </location>
</feature>
<feature type="glycosylation site" description="N-linked (GlcNAc...) asparagine; by host" evidence="1">
    <location>
        <position position="120"/>
    </location>
</feature>
<feature type="glycosylation site" description="N-linked (GlcNAc...) asparagine; by host" evidence="1">
    <location>
        <position position="150"/>
    </location>
</feature>
<feature type="glycosylation site" description="N-linked (GlcNAc...) asparagine; by host" evidence="1">
    <location>
        <position position="156"/>
    </location>
</feature>
<feature type="glycosylation site" description="N-linked (GlcNAc...) asparagine; by host" evidence="1">
    <location>
        <position position="168"/>
    </location>
</feature>
<feature type="glycosylation site" description="N-linked (GlcNAc...) asparagine; by host" evidence="1">
    <location>
        <position position="212"/>
    </location>
</feature>
<feature type="glycosylation site" description="N-linked (GlcNAc...) asparagine; by host" evidence="1">
    <location>
        <position position="249"/>
    </location>
</feature>
<name>U18_HHV6U</name>
<gene>
    <name type="primary">U18</name>
    <name type="synonym">EJLF6</name>
</gene>
<reference key="1">
    <citation type="journal article" date="1994" name="J. Virol.">
        <title>Nucleotide sequence analysis of a 38.5-kilobase-pair region of the genome of human herpesvirus 6 encoding human cytomegalovirus immediate-early gene homologs and transactivating functions.</title>
        <authorList>
            <person name="Nicholas J."/>
            <person name="Martin M.E.D."/>
        </authorList>
    </citation>
    <scope>NUCLEOTIDE SEQUENCE [GENOMIC DNA]</scope>
</reference>
<reference key="2">
    <citation type="journal article" date="1995" name="Virology">
        <title>The DNA sequence of human herpesvirus-6: structure, coding content, and genome evolution.</title>
        <authorList>
            <person name="Gompels U.A."/>
            <person name="Nicholas J."/>
            <person name="Lawrence G.L."/>
            <person name="Jones M."/>
            <person name="Thomson B.J."/>
            <person name="Martin M.E.D."/>
            <person name="Efstathiou S."/>
            <person name="Craxton M.A."/>
            <person name="Macaulay H.A."/>
        </authorList>
    </citation>
    <scope>NUCLEOTIDE SEQUENCE [LARGE SCALE GENOMIC DNA]</scope>
</reference>
<protein>
    <recommendedName>
        <fullName>Putative immediate early glycoprotein</fullName>
    </recommendedName>
    <alternativeName>
        <fullName>Protein U18</fullName>
    </alternativeName>
</protein>
<sequence length="293" mass="33218">MKKLTMESLSVYIFVMGVCFTSNFTCEQKIVLIQEHKLRSICISTCYVNGVLAGNSSCVSVKTSYLINLAMLTNGFKAMRVGNITSISEKTAFLRVIINYYFRGVMLRALIAQRLPNAANLSSTVNCWLDDHSAGGVMTLFYGTERIVLNSSTEINASRWISDGQDANGTLNILNERVSLDIYFLSKICPQLSSEIYKKKVAHPKYFSLIKNDTKPKKFLRNTWRSAWSNWYKYKEIKEFLDFSSDYENFSEITYSMSAAGLFFLAGGAFTMLLLLCCLSMITRKHIVKDLGY</sequence>
<organismHost>
    <name type="scientific">Homo sapiens</name>
    <name type="common">Human</name>
    <dbReference type="NCBI Taxonomy" id="9606"/>
</organismHost>
<dbReference type="EMBL" id="L25528">
    <property type="protein sequence ID" value="AAA16724.1"/>
    <property type="status" value="ALT_INIT"/>
    <property type="molecule type" value="Genomic_DNA"/>
</dbReference>
<dbReference type="EMBL" id="X83413">
    <property type="protein sequence ID" value="CAA58398.1"/>
    <property type="molecule type" value="Genomic_DNA"/>
</dbReference>
<dbReference type="PIR" id="T09311">
    <property type="entry name" value="T09311"/>
</dbReference>
<dbReference type="RefSeq" id="NP_042911.1">
    <property type="nucleotide sequence ID" value="NC_001664.2"/>
</dbReference>
<dbReference type="GlyCosmos" id="Q69553">
    <property type="glycosylation" value="9 sites, No reported glycans"/>
</dbReference>
<dbReference type="DNASU" id="1487934"/>
<dbReference type="GeneID" id="1487934"/>
<dbReference type="KEGG" id="vg:1487934"/>
<dbReference type="Proteomes" id="UP000009295">
    <property type="component" value="Segment"/>
</dbReference>
<dbReference type="GO" id="GO:0016020">
    <property type="term" value="C:membrane"/>
    <property type="evidence" value="ECO:0007669"/>
    <property type="project" value="UniProtKB-SubCell"/>
</dbReference>
<dbReference type="InterPro" id="IPR010880">
    <property type="entry name" value="Herpes_UL37_HHV-5-rel"/>
</dbReference>
<dbReference type="Pfam" id="PF07413">
    <property type="entry name" value="Herpes_UL37_2"/>
    <property type="match status" value="1"/>
</dbReference>